<organism>
    <name type="scientific">Escherichia coli</name>
    <dbReference type="NCBI Taxonomy" id="562"/>
    <lineage>
        <taxon>Bacteria</taxon>
        <taxon>Pseudomonadati</taxon>
        <taxon>Pseudomonadota</taxon>
        <taxon>Gammaproteobacteria</taxon>
        <taxon>Enterobacterales</taxon>
        <taxon>Enterobacteriaceae</taxon>
        <taxon>Escherichia</taxon>
    </lineage>
</organism>
<name>YPR3_ECOLX</name>
<comment type="miscellaneous">
    <text>The predicted protein is highly basic.</text>
</comment>
<proteinExistence type="predicted"/>
<geneLocation type="plasmid">
    <name>R6K</name>
</geneLocation>
<keyword id="KW-0614">Plasmid</keyword>
<dbReference type="EMBL" id="V00320">
    <property type="protein sequence ID" value="CAA23612.1"/>
    <property type="molecule type" value="Genomic_DNA"/>
</dbReference>
<dbReference type="RefSeq" id="WP_015058247.1">
    <property type="nucleotide sequence ID" value="NZ_RDUC01000026.1"/>
</dbReference>
<dbReference type="RefSeq" id="YP_006903148.1">
    <property type="nucleotide sequence ID" value="NC_019047.1"/>
</dbReference>
<protein>
    <recommendedName>
        <fullName>Uncharacterized 17.4 kDa protein</fullName>
    </recommendedName>
</protein>
<reference key="1">
    <citation type="journal article" date="1983" name="J. Biol. Chem.">
        <title>Structural properties of the beta origin of replication of plasmid R6K.</title>
        <authorList>
            <person name="Shafferman A."/>
            <person name="Helinski D.R."/>
        </authorList>
    </citation>
    <scope>NUCLEOTIDE SEQUENCE [GENOMIC DNA]</scope>
</reference>
<sequence>MAKIYDFPQGAERRRMHRKIQWNNAVKLSKNGWSKPEVKRWSFLAFISTGWYYFRLSVAVIFHIITICGLAVLAALSNTIFWIGGAICLVTWYTNDHQIWSTNNLTIPIVFGLWVLSLVAAPLIDFFSQKLPFYRLLVPDAKREEVGEDDS</sequence>
<feature type="chain" id="PRO_0000068531" description="Uncharacterized 17.4 kDa protein">
    <location>
        <begin position="1"/>
        <end position="151"/>
    </location>
</feature>
<accession>P10027</accession>